<protein>
    <recommendedName>
        <fullName evidence="3">Protein anoxia up-regulated</fullName>
    </recommendedName>
</protein>
<gene>
    <name evidence="3 4" type="primary">fau</name>
    <name evidence="4" type="ORF">CG45077</name>
</gene>
<proteinExistence type="evidence at transcript level"/>
<comment type="function">
    <text evidence="2">Plays an important role in the regulation of tissue responsiveness to oxygen deprivation.</text>
</comment>
<comment type="tissue specificity">
    <text evidence="2">Concentrated in lamina neurons, first optic lobe neurons and cortical neurons of central brain.</text>
</comment>
<comment type="induction">
    <text evidence="2">By anoxia.</text>
</comment>
<comment type="miscellaneous">
    <text evidence="3">'fau' is an acronym for 'fly, anoxia, up-regulated'.</text>
</comment>
<organism>
    <name type="scientific">Drosophila melanogaster</name>
    <name type="common">Fruit fly</name>
    <dbReference type="NCBI Taxonomy" id="7227"/>
    <lineage>
        <taxon>Eukaryota</taxon>
        <taxon>Metazoa</taxon>
        <taxon>Ecdysozoa</taxon>
        <taxon>Arthropoda</taxon>
        <taxon>Hexapoda</taxon>
        <taxon>Insecta</taxon>
        <taxon>Pterygota</taxon>
        <taxon>Neoptera</taxon>
        <taxon>Endopterygota</taxon>
        <taxon>Diptera</taxon>
        <taxon>Brachycera</taxon>
        <taxon>Muscomorpha</taxon>
        <taxon>Ephydroidea</taxon>
        <taxon>Drosophilidae</taxon>
        <taxon>Drosophila</taxon>
        <taxon>Sophophora</taxon>
    </lineage>
</organism>
<reference key="1">
    <citation type="journal article" date="1999" name="Brain Res. Mol. Brain Res.">
        <title>Gene regulation by O2 deprivation: an anoxia-regulated novel gene in Drosophila melanogaster.</title>
        <authorList>
            <person name="Ma E."/>
            <person name="Xu T."/>
            <person name="Haddad G.G."/>
        </authorList>
    </citation>
    <scope>NUCLEOTIDE SEQUENCE [MRNA]</scope>
    <scope>FUNCTION</scope>
    <scope>TISSUE SPECIFICITY</scope>
    <scope>INDUCTION</scope>
    <source>
        <strain>Canton-S</strain>
        <tissue>Head</tissue>
    </source>
</reference>
<reference key="2">
    <citation type="journal article" date="2000" name="Science">
        <title>The genome sequence of Drosophila melanogaster.</title>
        <authorList>
            <person name="Adams M.D."/>
            <person name="Celniker S.E."/>
            <person name="Holt R.A."/>
            <person name="Evans C.A."/>
            <person name="Gocayne J.D."/>
            <person name="Amanatides P.G."/>
            <person name="Scherer S.E."/>
            <person name="Li P.W."/>
            <person name="Hoskins R.A."/>
            <person name="Galle R.F."/>
            <person name="George R.A."/>
            <person name="Lewis S.E."/>
            <person name="Richards S."/>
            <person name="Ashburner M."/>
            <person name="Henderson S.N."/>
            <person name="Sutton G.G."/>
            <person name="Wortman J.R."/>
            <person name="Yandell M.D."/>
            <person name="Zhang Q."/>
            <person name="Chen L.X."/>
            <person name="Brandon R.C."/>
            <person name="Rogers Y.-H.C."/>
            <person name="Blazej R.G."/>
            <person name="Champe M."/>
            <person name="Pfeiffer B.D."/>
            <person name="Wan K.H."/>
            <person name="Doyle C."/>
            <person name="Baxter E.G."/>
            <person name="Helt G."/>
            <person name="Nelson C.R."/>
            <person name="Miklos G.L.G."/>
            <person name="Abril J.F."/>
            <person name="Agbayani A."/>
            <person name="An H.-J."/>
            <person name="Andrews-Pfannkoch C."/>
            <person name="Baldwin D."/>
            <person name="Ballew R.M."/>
            <person name="Basu A."/>
            <person name="Baxendale J."/>
            <person name="Bayraktaroglu L."/>
            <person name="Beasley E.M."/>
            <person name="Beeson K.Y."/>
            <person name="Benos P.V."/>
            <person name="Berman B.P."/>
            <person name="Bhandari D."/>
            <person name="Bolshakov S."/>
            <person name="Borkova D."/>
            <person name="Botchan M.R."/>
            <person name="Bouck J."/>
            <person name="Brokstein P."/>
            <person name="Brottier P."/>
            <person name="Burtis K.C."/>
            <person name="Busam D.A."/>
            <person name="Butler H."/>
            <person name="Cadieu E."/>
            <person name="Center A."/>
            <person name="Chandra I."/>
            <person name="Cherry J.M."/>
            <person name="Cawley S."/>
            <person name="Dahlke C."/>
            <person name="Davenport L.B."/>
            <person name="Davies P."/>
            <person name="de Pablos B."/>
            <person name="Delcher A."/>
            <person name="Deng Z."/>
            <person name="Mays A.D."/>
            <person name="Dew I."/>
            <person name="Dietz S.M."/>
            <person name="Dodson K."/>
            <person name="Doup L.E."/>
            <person name="Downes M."/>
            <person name="Dugan-Rocha S."/>
            <person name="Dunkov B.C."/>
            <person name="Dunn P."/>
            <person name="Durbin K.J."/>
            <person name="Evangelista C.C."/>
            <person name="Ferraz C."/>
            <person name="Ferriera S."/>
            <person name="Fleischmann W."/>
            <person name="Fosler C."/>
            <person name="Gabrielian A.E."/>
            <person name="Garg N.S."/>
            <person name="Gelbart W.M."/>
            <person name="Glasser K."/>
            <person name="Glodek A."/>
            <person name="Gong F."/>
            <person name="Gorrell J.H."/>
            <person name="Gu Z."/>
            <person name="Guan P."/>
            <person name="Harris M."/>
            <person name="Harris N.L."/>
            <person name="Harvey D.A."/>
            <person name="Heiman T.J."/>
            <person name="Hernandez J.R."/>
            <person name="Houck J."/>
            <person name="Hostin D."/>
            <person name="Houston K.A."/>
            <person name="Howland T.J."/>
            <person name="Wei M.-H."/>
            <person name="Ibegwam C."/>
            <person name="Jalali M."/>
            <person name="Kalush F."/>
            <person name="Karpen G.H."/>
            <person name="Ke Z."/>
            <person name="Kennison J.A."/>
            <person name="Ketchum K.A."/>
            <person name="Kimmel B.E."/>
            <person name="Kodira C.D."/>
            <person name="Kraft C.L."/>
            <person name="Kravitz S."/>
            <person name="Kulp D."/>
            <person name="Lai Z."/>
            <person name="Lasko P."/>
            <person name="Lei Y."/>
            <person name="Levitsky A.A."/>
            <person name="Li J.H."/>
            <person name="Li Z."/>
            <person name="Liang Y."/>
            <person name="Lin X."/>
            <person name="Liu X."/>
            <person name="Mattei B."/>
            <person name="McIntosh T.C."/>
            <person name="McLeod M.P."/>
            <person name="McPherson D."/>
            <person name="Merkulov G."/>
            <person name="Milshina N.V."/>
            <person name="Mobarry C."/>
            <person name="Morris J."/>
            <person name="Moshrefi A."/>
            <person name="Mount S.M."/>
            <person name="Moy M."/>
            <person name="Murphy B."/>
            <person name="Murphy L."/>
            <person name="Muzny D.M."/>
            <person name="Nelson D.L."/>
            <person name="Nelson D.R."/>
            <person name="Nelson K.A."/>
            <person name="Nixon K."/>
            <person name="Nusskern D.R."/>
            <person name="Pacleb J.M."/>
            <person name="Palazzolo M."/>
            <person name="Pittman G.S."/>
            <person name="Pan S."/>
            <person name="Pollard J."/>
            <person name="Puri V."/>
            <person name="Reese M.G."/>
            <person name="Reinert K."/>
            <person name="Remington K."/>
            <person name="Saunders R.D.C."/>
            <person name="Scheeler F."/>
            <person name="Shen H."/>
            <person name="Shue B.C."/>
            <person name="Siden-Kiamos I."/>
            <person name="Simpson M."/>
            <person name="Skupski M.P."/>
            <person name="Smith T.J."/>
            <person name="Spier E."/>
            <person name="Spradling A.C."/>
            <person name="Stapleton M."/>
            <person name="Strong R."/>
            <person name="Sun E."/>
            <person name="Svirskas R."/>
            <person name="Tector C."/>
            <person name="Turner R."/>
            <person name="Venter E."/>
            <person name="Wang A.H."/>
            <person name="Wang X."/>
            <person name="Wang Z.-Y."/>
            <person name="Wassarman D.A."/>
            <person name="Weinstock G.M."/>
            <person name="Weissenbach J."/>
            <person name="Williams S.M."/>
            <person name="Woodage T."/>
            <person name="Worley K.C."/>
            <person name="Wu D."/>
            <person name="Yang S."/>
            <person name="Yao Q.A."/>
            <person name="Ye J."/>
            <person name="Yeh R.-F."/>
            <person name="Zaveri J.S."/>
            <person name="Zhan M."/>
            <person name="Zhang G."/>
            <person name="Zhao Q."/>
            <person name="Zheng L."/>
            <person name="Zheng X.H."/>
            <person name="Zhong F.N."/>
            <person name="Zhong W."/>
            <person name="Zhou X."/>
            <person name="Zhu S.C."/>
            <person name="Zhu X."/>
            <person name="Smith H.O."/>
            <person name="Gibbs R.A."/>
            <person name="Myers E.W."/>
            <person name="Rubin G.M."/>
            <person name="Venter J.C."/>
        </authorList>
    </citation>
    <scope>NUCLEOTIDE SEQUENCE [LARGE SCALE GENOMIC DNA]</scope>
    <source>
        <strain>Berkeley</strain>
    </source>
</reference>
<reference key="3">
    <citation type="journal article" date="2002" name="Genome Biol.">
        <title>Annotation of the Drosophila melanogaster euchromatic genome: a systematic review.</title>
        <authorList>
            <person name="Misra S."/>
            <person name="Crosby M.A."/>
            <person name="Mungall C.J."/>
            <person name="Matthews B.B."/>
            <person name="Campbell K.S."/>
            <person name="Hradecky P."/>
            <person name="Huang Y."/>
            <person name="Kaminker J.S."/>
            <person name="Millburn G.H."/>
            <person name="Prochnik S.E."/>
            <person name="Smith C.D."/>
            <person name="Tupy J.L."/>
            <person name="Whitfield E.J."/>
            <person name="Bayraktaroglu L."/>
            <person name="Berman B.P."/>
            <person name="Bettencourt B.R."/>
            <person name="Celniker S.E."/>
            <person name="de Grey A.D.N.J."/>
            <person name="Drysdale R.A."/>
            <person name="Harris N.L."/>
            <person name="Richter J."/>
            <person name="Russo S."/>
            <person name="Schroeder A.J."/>
            <person name="Shu S.Q."/>
            <person name="Stapleton M."/>
            <person name="Yamada C."/>
            <person name="Ashburner M."/>
            <person name="Gelbart W.M."/>
            <person name="Rubin G.M."/>
            <person name="Lewis S.E."/>
        </authorList>
    </citation>
    <scope>GENOME REANNOTATION</scope>
    <source>
        <strain>Berkeley</strain>
    </source>
</reference>
<reference key="4">
    <citation type="journal article" date="2002" name="Genome Biol.">
        <title>A Drosophila full-length cDNA resource.</title>
        <authorList>
            <person name="Stapleton M."/>
            <person name="Carlson J.W."/>
            <person name="Brokstein P."/>
            <person name="Yu C."/>
            <person name="Champe M."/>
            <person name="George R.A."/>
            <person name="Guarin H."/>
            <person name="Kronmiller B."/>
            <person name="Pacleb J.M."/>
            <person name="Park S."/>
            <person name="Wan K.H."/>
            <person name="Rubin G.M."/>
            <person name="Celniker S.E."/>
        </authorList>
    </citation>
    <scope>NUCLEOTIDE SEQUENCE [LARGE SCALE MRNA]</scope>
    <source>
        <strain>Berkeley</strain>
        <tissue>Head</tissue>
    </source>
</reference>
<keyword id="KW-1185">Reference proteome</keyword>
<keyword id="KW-0346">Stress response</keyword>
<feature type="chain" id="PRO_0000087203" description="Protein anoxia up-regulated">
    <location>
        <begin position="1"/>
        <end position="131"/>
    </location>
</feature>
<feature type="region of interest" description="Disordered" evidence="1">
    <location>
        <begin position="1"/>
        <end position="121"/>
    </location>
</feature>
<feature type="compositionally biased region" description="Polar residues" evidence="1">
    <location>
        <begin position="1"/>
        <end position="24"/>
    </location>
</feature>
<feature type="compositionally biased region" description="Low complexity" evidence="1">
    <location>
        <begin position="44"/>
        <end position="53"/>
    </location>
</feature>
<feature type="compositionally biased region" description="Low complexity" evidence="1">
    <location>
        <begin position="98"/>
        <end position="116"/>
    </location>
</feature>
<accession>C0HK95</accession>
<accession>Q95S18</accession>
<accession>Q9VGX1</accession>
<accession>Q9VGX2</accession>
<accession>Q9VGX3</accession>
<accession>Q9Y0F9</accession>
<sequence>MVYESGFTTRRTYSSRPVTTSYAVTTPRLDLCTDRPGSHRSRASSDYSYTSKSSVEKSSYDSSNPHSYRPERSTYTSTVEKTSRSGPGGSYNYSTERTSTTGAGPGGYSYSSTTSGNLPGGTKYRHFSYHV</sequence>
<dbReference type="EMBL" id="AF154418">
    <property type="protein sequence ID" value="AAD38397.1"/>
    <property type="molecule type" value="mRNA"/>
</dbReference>
<dbReference type="EMBL" id="AE014297">
    <property type="protein sequence ID" value="AAF54551.1"/>
    <property type="molecule type" value="Genomic_DNA"/>
</dbReference>
<dbReference type="EMBL" id="AY119569">
    <property type="protein sequence ID" value="AAM50223.1"/>
    <property type="molecule type" value="mRNA"/>
</dbReference>
<dbReference type="RefSeq" id="NP_731505.1">
    <property type="nucleotide sequence ID" value="NM_169361.3"/>
</dbReference>
<dbReference type="IntAct" id="C0HK95">
    <property type="interactions" value="34"/>
</dbReference>
<dbReference type="STRING" id="7227.FBpp0310816"/>
<dbReference type="DNASU" id="41291"/>
<dbReference type="EnsemblMetazoa" id="FBtr0344444">
    <property type="protein sequence ID" value="FBpp0310816"/>
    <property type="gene ID" value="FBgn0266451"/>
</dbReference>
<dbReference type="GeneID" id="41291"/>
<dbReference type="KEGG" id="dme:Dmel_CG45077"/>
<dbReference type="AGR" id="FB:FBgn0266451"/>
<dbReference type="CTD" id="2197"/>
<dbReference type="FlyBase" id="FBgn0266451">
    <property type="gene designation" value="fau"/>
</dbReference>
<dbReference type="VEuPathDB" id="VectorBase:FBgn0266451"/>
<dbReference type="InParanoid" id="C0HK95"/>
<dbReference type="OMA" id="THCSITS"/>
<dbReference type="OrthoDB" id="8194914at2759"/>
<dbReference type="BioGRID-ORCS" id="41291">
    <property type="hits" value="0 hits in 1 CRISPR screen"/>
</dbReference>
<dbReference type="GenomeRNAi" id="41291"/>
<dbReference type="PRO" id="PR:C0HK95"/>
<dbReference type="Proteomes" id="UP000000803">
    <property type="component" value="Chromosome 3R"/>
</dbReference>
<dbReference type="Bgee" id="FBgn0266451">
    <property type="expression patterns" value="Expressed in muscle cell in insect leg and 69 other cell types or tissues"/>
</dbReference>
<dbReference type="ExpressionAtlas" id="C0HK95">
    <property type="expression patterns" value="baseline and differential"/>
</dbReference>
<dbReference type="GO" id="GO:0034059">
    <property type="term" value="P:response to anoxia"/>
    <property type="evidence" value="ECO:0000315"/>
    <property type="project" value="FlyBase"/>
</dbReference>
<name>FAU_DROME</name>
<evidence type="ECO:0000256" key="1">
    <source>
        <dbReference type="SAM" id="MobiDB-lite"/>
    </source>
</evidence>
<evidence type="ECO:0000269" key="2">
    <source>
    </source>
</evidence>
<evidence type="ECO:0000303" key="3">
    <source>
    </source>
</evidence>
<evidence type="ECO:0000312" key="4">
    <source>
        <dbReference type="FlyBase" id="FBgn0266451"/>
    </source>
</evidence>